<organism>
    <name type="scientific">Pyricularia oryzae (strain 70-15 / ATCC MYA-4617 / FGSC 8958)</name>
    <name type="common">Rice blast fungus</name>
    <name type="synonym">Magnaporthe oryzae</name>
    <dbReference type="NCBI Taxonomy" id="242507"/>
    <lineage>
        <taxon>Eukaryota</taxon>
        <taxon>Fungi</taxon>
        <taxon>Dikarya</taxon>
        <taxon>Ascomycota</taxon>
        <taxon>Pezizomycotina</taxon>
        <taxon>Sordariomycetes</taxon>
        <taxon>Sordariomycetidae</taxon>
        <taxon>Magnaporthales</taxon>
        <taxon>Pyriculariaceae</taxon>
        <taxon>Pyricularia</taxon>
    </lineage>
</organism>
<accession>O13353</accession>
<accession>A4R0F5</accession>
<accession>G4MRN7</accession>
<dbReference type="EC" id="2.4.1.16" evidence="7"/>
<dbReference type="EMBL" id="AF020528">
    <property type="protein sequence ID" value="AAB71411.1"/>
    <property type="status" value="ALT_FRAME"/>
    <property type="molecule type" value="Genomic_DNA"/>
</dbReference>
<dbReference type="EMBL" id="CM001231">
    <property type="protein sequence ID" value="EHA57460.1"/>
    <property type="molecule type" value="Genomic_DNA"/>
</dbReference>
<dbReference type="EMBL" id="CM001231">
    <property type="protein sequence ID" value="EHA57461.1"/>
    <property type="molecule type" value="Genomic_DNA"/>
</dbReference>
<dbReference type="RefSeq" id="XP_003710072.1">
    <property type="nucleotide sequence ID" value="XM_003710024.1"/>
</dbReference>
<dbReference type="RefSeq" id="XP_003710073.1">
    <property type="nucleotide sequence ID" value="XM_003710025.1"/>
</dbReference>
<dbReference type="FunCoup" id="O13353">
    <property type="interactions" value="73"/>
</dbReference>
<dbReference type="STRING" id="242507.O13353"/>
<dbReference type="CAZy" id="GT2">
    <property type="family name" value="Glycosyltransferase Family 2"/>
</dbReference>
<dbReference type="GlyCosmos" id="O13353">
    <property type="glycosylation" value="3 sites, No reported glycans"/>
</dbReference>
<dbReference type="EnsemblFungi" id="MGG_09962T0">
    <property type="protein sequence ID" value="MGG_09962T0"/>
    <property type="gene ID" value="MGG_09962"/>
</dbReference>
<dbReference type="EnsemblFungi" id="MGG_09962T1">
    <property type="protein sequence ID" value="MGG_09962T1"/>
    <property type="gene ID" value="MGG_09962"/>
</dbReference>
<dbReference type="GeneID" id="2680870"/>
<dbReference type="KEGG" id="mgr:MGG_09962"/>
<dbReference type="VEuPathDB" id="FungiDB:MGG_09962"/>
<dbReference type="eggNOG" id="KOG2571">
    <property type="taxonomic scope" value="Eukaryota"/>
</dbReference>
<dbReference type="HOGENOM" id="CLU_002572_1_0_1"/>
<dbReference type="InParanoid" id="O13353"/>
<dbReference type="OMA" id="DIMGLCG"/>
<dbReference type="OrthoDB" id="370884at2759"/>
<dbReference type="Proteomes" id="UP000009058">
    <property type="component" value="Chromosome 1"/>
</dbReference>
<dbReference type="GO" id="GO:0030428">
    <property type="term" value="C:cell septum"/>
    <property type="evidence" value="ECO:0007669"/>
    <property type="project" value="TreeGrafter"/>
</dbReference>
<dbReference type="GO" id="GO:0005935">
    <property type="term" value="C:cellular bud neck"/>
    <property type="evidence" value="ECO:0007669"/>
    <property type="project" value="EnsemblFungi"/>
</dbReference>
<dbReference type="GO" id="GO:0045009">
    <property type="term" value="C:chitosome"/>
    <property type="evidence" value="ECO:0007669"/>
    <property type="project" value="EnsemblFungi"/>
</dbReference>
<dbReference type="GO" id="GO:0000131">
    <property type="term" value="C:incipient cellular bud site"/>
    <property type="evidence" value="ECO:0007669"/>
    <property type="project" value="EnsemblFungi"/>
</dbReference>
<dbReference type="GO" id="GO:0005886">
    <property type="term" value="C:plasma membrane"/>
    <property type="evidence" value="ECO:0007669"/>
    <property type="project" value="UniProtKB-SubCell"/>
</dbReference>
<dbReference type="GO" id="GO:0005628">
    <property type="term" value="C:prospore membrane"/>
    <property type="evidence" value="ECO:0007669"/>
    <property type="project" value="EnsemblFungi"/>
</dbReference>
<dbReference type="GO" id="GO:0004100">
    <property type="term" value="F:chitin synthase activity"/>
    <property type="evidence" value="ECO:0007669"/>
    <property type="project" value="UniProtKB-EC"/>
</dbReference>
<dbReference type="GO" id="GO:0030476">
    <property type="term" value="P:ascospore wall assembly"/>
    <property type="evidence" value="ECO:0007669"/>
    <property type="project" value="EnsemblFungi"/>
</dbReference>
<dbReference type="GO" id="GO:0006031">
    <property type="term" value="P:chitin biosynthetic process"/>
    <property type="evidence" value="ECO:0007669"/>
    <property type="project" value="EnsemblFungi"/>
</dbReference>
<dbReference type="GO" id="GO:0097271">
    <property type="term" value="P:protein localization to bud neck"/>
    <property type="evidence" value="ECO:0007669"/>
    <property type="project" value="EnsemblFungi"/>
</dbReference>
<dbReference type="CDD" id="cd04190">
    <property type="entry name" value="Chitin_synth_C"/>
    <property type="match status" value="1"/>
</dbReference>
<dbReference type="Gene3D" id="3.90.550.10">
    <property type="entry name" value="Spore Coat Polysaccharide Biosynthesis Protein SpsA, Chain A"/>
    <property type="match status" value="1"/>
</dbReference>
<dbReference type="InterPro" id="IPR004835">
    <property type="entry name" value="Chitin_synth"/>
</dbReference>
<dbReference type="InterPro" id="IPR054295">
    <property type="entry name" value="CHS4-like_dom"/>
</dbReference>
<dbReference type="InterPro" id="IPR001199">
    <property type="entry name" value="Cyt_B5-like_heme/steroid-bd"/>
</dbReference>
<dbReference type="InterPro" id="IPR029044">
    <property type="entry name" value="Nucleotide-diphossugar_trans"/>
</dbReference>
<dbReference type="PANTHER" id="PTHR22914">
    <property type="entry name" value="CHITIN SYNTHASE"/>
    <property type="match status" value="1"/>
</dbReference>
<dbReference type="PANTHER" id="PTHR22914:SF16">
    <property type="entry name" value="CHITIN SYNTHASE 3"/>
    <property type="match status" value="1"/>
</dbReference>
<dbReference type="Pfam" id="PF03142">
    <property type="entry name" value="Chitin_synth_2"/>
    <property type="match status" value="1"/>
</dbReference>
<dbReference type="Pfam" id="PF22997">
    <property type="entry name" value="CHS4"/>
    <property type="match status" value="1"/>
</dbReference>
<dbReference type="SMART" id="SM01117">
    <property type="entry name" value="Cyt-b5"/>
    <property type="match status" value="1"/>
</dbReference>
<dbReference type="SUPFAM" id="SSF53448">
    <property type="entry name" value="Nucleotide-diphospho-sugar transferases"/>
    <property type="match status" value="1"/>
</dbReference>
<name>CHS4_PYRO7</name>
<reference key="1">
    <citation type="submission" date="1997-08" db="EMBL/GenBank/DDBJ databases">
        <authorList>
            <person name="Specht C.A."/>
        </authorList>
    </citation>
    <scope>NUCLEOTIDE SEQUENCE [GENOMIC DNA]</scope>
    <source>
        <strain>Guyane 11</strain>
    </source>
</reference>
<reference key="2">
    <citation type="journal article" date="2005" name="Nature">
        <title>The genome sequence of the rice blast fungus Magnaporthe grisea.</title>
        <authorList>
            <person name="Dean R.A."/>
            <person name="Talbot N.J."/>
            <person name="Ebbole D.J."/>
            <person name="Farman M.L."/>
            <person name="Mitchell T.K."/>
            <person name="Orbach M.J."/>
            <person name="Thon M.R."/>
            <person name="Kulkarni R."/>
            <person name="Xu J.-R."/>
            <person name="Pan H."/>
            <person name="Read N.D."/>
            <person name="Lee Y.-H."/>
            <person name="Carbone I."/>
            <person name="Brown D."/>
            <person name="Oh Y.Y."/>
            <person name="Donofrio N."/>
            <person name="Jeong J.S."/>
            <person name="Soanes D.M."/>
            <person name="Djonovic S."/>
            <person name="Kolomiets E."/>
            <person name="Rehmeyer C."/>
            <person name="Li W."/>
            <person name="Harding M."/>
            <person name="Kim S."/>
            <person name="Lebrun M.-H."/>
            <person name="Bohnert H."/>
            <person name="Coughlan S."/>
            <person name="Butler J."/>
            <person name="Calvo S.E."/>
            <person name="Ma L.-J."/>
            <person name="Nicol R."/>
            <person name="Purcell S."/>
            <person name="Nusbaum C."/>
            <person name="Galagan J.E."/>
            <person name="Birren B.W."/>
        </authorList>
    </citation>
    <scope>NUCLEOTIDE SEQUENCE [LARGE SCALE GENOMIC DNA]</scope>
    <source>
        <strain>70-15 / ATCC MYA-4617 / FGSC 8958</strain>
    </source>
</reference>
<reference key="3">
    <citation type="journal article" date="2012" name="PLoS Pathog.">
        <title>Different chitin synthase genes are required for various developmental and plant infection processes in the rice blast fungus Magnaporthe oryzae.</title>
        <authorList>
            <person name="Kong L.A."/>
            <person name="Yang J."/>
            <person name="Li G.T."/>
            <person name="Qi L.L."/>
            <person name="Zhang Y.J."/>
            <person name="Wang C.F."/>
            <person name="Zhao W.S."/>
            <person name="Xu J.R."/>
            <person name="Peng Y.L."/>
        </authorList>
    </citation>
    <scope>FUNCTION</scope>
    <scope>DISRUPTION PHENOTYPE</scope>
</reference>
<sequence>MSLPERPGAKASYEQRNSYRKSPSRRNRPNDIEASGYYPVTGGQHQRGPSVNSFAETIRSPNSNIESAPLSPSAEQIEHGSDQPFQRKRSLIRPERNRIDRDHPNYHYRKHAAKMNTLPSSTGNDPVLEDVSGATESGPPSGSNSASGSGVREENIPRKSRKASGRETVAEKSDNTRRRVSTRNSKIVKEGKRKEKIPEQLRPPSAWNVYCAVITFWSPDFIMKCCGMPAKAQRRAWREKIGLISLILIIMGVVGFLTFGFNQAVCGGPVLRLHINSVDRSYMIFHGTAYNLDGSHHPVAEGIPKRLDGTGANVVYDLPEGYGGTDGSFMFQNVNGKCKGLITKAPNSDVPSEGDNLAWYFPCHARNQDGSSQPNMTYPYYFGYACHTTPLARSTFYTQLDKSADVYFTWADIRNNSRNLFVYSGNVLDLDLLFWFNRDQVNIPRRFEELRDKNNAANRAIRGRDATRTFMASGDRQIAECFEDIIKVGTVDTDTVGCIAAKVVLYVSLALILSVVGARFTLALIFQWFISKNYAADKTSQTSDKRKRNKQIEDWSEDIYRAPPRMPGDVGSSVAGASSSDHTSKRSSFLPTTSRFSTVYGAERSARNKSMPTTMASQASGGYMGPSSTAYRETNESRTSFLKSDPYATNTAPIEGPGPSGFIHDSVVPQPPSDWMPFGFPLAHTICLVTAYSEGELGLRTTLDSVAMTDYPNSHKVILVICDGIIKGKGESKSTPEYVLDMMKDHTIPVEDVEAFSYVAVASGSKRHNMAKIYAGFYDYGTQSNIPLDKQQRVPMMVVVKCGTPDEMVKSKPGNRGKRDSQIILMSFLQKVMFDERMTELEYEMFNGLWKVTGISPDFYEIVLMVDADTKVFPDSLTHMISAMVKDPEIMGLCGETKIANKRDSWVSAIQVFEYFISHHLAKSFESVFGGVTCLPGCFCMYRIKAPKGAQNYWVPILANPDVVEHYSENVVDTLHKKNLLLLGEDRYLTTLMLRTFPKRKQVFVPQAVCKTTVPDSFMVLLSQRRRWINSTIHNLMELVLVRDLCGTFCFSMQFVIFIELIGTLVLPAAIAFTFYVVIISIINQPPQIIPLVLLGLILGLPAILIIITAHSWSYVLWMLIYLLSLPVWNFVLPAYAFWKFDDFSWGDTRKTAGEKTKKAGIEYEGEFDSSKITMKRWAEFERDRRARQSQYWGSRENVTGGVRTASGVWASAPPHHHQQQYDEYYSDA</sequence>
<feature type="chain" id="PRO_0000193700" description="Chitin synthase 4">
    <location>
        <begin position="1"/>
        <end position="1229"/>
    </location>
</feature>
<feature type="topological domain" description="Cytoplasmic" evidence="6">
    <location>
        <begin position="1"/>
        <end position="202"/>
    </location>
</feature>
<feature type="transmembrane region" description="Helical" evidence="1">
    <location>
        <begin position="203"/>
        <end position="223"/>
    </location>
</feature>
<feature type="topological domain" description="Extracellular" evidence="6">
    <location>
        <begin position="224"/>
        <end position="240"/>
    </location>
</feature>
<feature type="transmembrane region" description="Helical" evidence="1">
    <location>
        <begin position="241"/>
        <end position="261"/>
    </location>
</feature>
<feature type="topological domain" description="Cytoplasmic" evidence="6">
    <location>
        <begin position="262"/>
        <end position="495"/>
    </location>
</feature>
<feature type="transmembrane region" description="Helical" evidence="1">
    <location>
        <begin position="496"/>
        <end position="516"/>
    </location>
</feature>
<feature type="topological domain" description="Extracellular" evidence="6">
    <location>
        <begin position="517"/>
        <end position="1054"/>
    </location>
</feature>
<feature type="transmembrane region" description="Helical" evidence="1">
    <location>
        <begin position="1055"/>
        <end position="1075"/>
    </location>
</feature>
<feature type="topological domain" description="Cytoplasmic" evidence="6">
    <location>
        <begin position="1076"/>
        <end position="1088"/>
    </location>
</feature>
<feature type="transmembrane region" description="Helical" evidence="1">
    <location>
        <begin position="1089"/>
        <end position="1109"/>
    </location>
</feature>
<feature type="topological domain" description="Extracellular" evidence="6">
    <location>
        <begin position="1110"/>
        <end position="1114"/>
    </location>
</feature>
<feature type="transmembrane region" description="Helical" evidence="1">
    <location>
        <begin position="1115"/>
        <end position="1135"/>
    </location>
</feature>
<feature type="topological domain" description="Cytoplasmic" evidence="6">
    <location>
        <begin position="1136"/>
        <end position="1229"/>
    </location>
</feature>
<feature type="region of interest" description="Disordered" evidence="3">
    <location>
        <begin position="1"/>
        <end position="196"/>
    </location>
</feature>
<feature type="region of interest" description="Disordered" evidence="3">
    <location>
        <begin position="539"/>
        <end position="589"/>
    </location>
</feature>
<feature type="region of interest" description="Disordered" evidence="3">
    <location>
        <begin position="601"/>
        <end position="648"/>
    </location>
</feature>
<feature type="region of interest" description="Disordered" evidence="3">
    <location>
        <begin position="1210"/>
        <end position="1229"/>
    </location>
</feature>
<feature type="compositionally biased region" description="Basic residues" evidence="3">
    <location>
        <begin position="18"/>
        <end position="27"/>
    </location>
</feature>
<feature type="compositionally biased region" description="Polar residues" evidence="3">
    <location>
        <begin position="43"/>
        <end position="66"/>
    </location>
</feature>
<feature type="compositionally biased region" description="Basic and acidic residues" evidence="3">
    <location>
        <begin position="92"/>
        <end position="105"/>
    </location>
</feature>
<feature type="compositionally biased region" description="Low complexity" evidence="3">
    <location>
        <begin position="137"/>
        <end position="150"/>
    </location>
</feature>
<feature type="compositionally biased region" description="Basic and acidic residues" evidence="3">
    <location>
        <begin position="164"/>
        <end position="177"/>
    </location>
</feature>
<feature type="compositionally biased region" description="Basic and acidic residues" evidence="3">
    <location>
        <begin position="187"/>
        <end position="196"/>
    </location>
</feature>
<feature type="compositionally biased region" description="Low complexity" evidence="3">
    <location>
        <begin position="568"/>
        <end position="581"/>
    </location>
</feature>
<feature type="compositionally biased region" description="Polar residues" evidence="3">
    <location>
        <begin position="608"/>
        <end position="648"/>
    </location>
</feature>
<feature type="glycosylation site" description="N-linked (GlcNAc...) asparagine" evidence="2">
    <location>
        <position position="608"/>
    </location>
</feature>
<feature type="glycosylation site" description="N-linked (GlcNAc...) asparagine" evidence="2">
    <location>
        <position position="635"/>
    </location>
</feature>
<feature type="glycosylation site" description="N-linked (GlcNAc...) asparagine" evidence="2">
    <location>
        <position position="1030"/>
    </location>
</feature>
<feature type="sequence variant" description="In strain: Guyane 11.">
    <original>KR</original>
    <variation>NG</variation>
    <location>
        <begin position="545"/>
        <end position="546"/>
    </location>
</feature>
<protein>
    <recommendedName>
        <fullName evidence="5">Chitin synthase 4</fullName>
        <ecNumber evidence="7">2.4.1.16</ecNumber>
    </recommendedName>
    <alternativeName>
        <fullName evidence="6">Chitin-UDP acetyl-glucosaminyl transferase 4</fullName>
    </alternativeName>
    <alternativeName>
        <fullName evidence="5">Class-IV chitin synthase 4</fullName>
    </alternativeName>
</protein>
<comment type="function">
    <text evidence="4 7">Polymerizes chitin, a structural polymer of the cell wall and septum, by transferring the sugar moiety of UDP-GlcNAc to the non-reducing end of the growing chitin polymer (Probable). Might function as a negative regulator on expression of other CHS genes (PubMed:22346755).</text>
</comment>
<comment type="catalytic activity">
    <reaction evidence="7">
        <text>[(1-&gt;4)-N-acetyl-beta-D-glucosaminyl](n) + UDP-N-acetyl-alpha-D-glucosamine = [(1-&gt;4)-N-acetyl-beta-D-glucosaminyl](n+1) + UDP + H(+)</text>
        <dbReference type="Rhea" id="RHEA:16637"/>
        <dbReference type="Rhea" id="RHEA-COMP:9593"/>
        <dbReference type="Rhea" id="RHEA-COMP:9595"/>
        <dbReference type="ChEBI" id="CHEBI:15378"/>
        <dbReference type="ChEBI" id="CHEBI:17029"/>
        <dbReference type="ChEBI" id="CHEBI:57705"/>
        <dbReference type="ChEBI" id="CHEBI:58223"/>
        <dbReference type="EC" id="2.4.1.16"/>
    </reaction>
    <physiologicalReaction direction="left-to-right" evidence="7">
        <dbReference type="Rhea" id="RHEA:16638"/>
    </physiologicalReaction>
</comment>
<comment type="subcellular location">
    <subcellularLocation>
        <location evidence="6">Cell membrane</location>
        <topology evidence="1">Multi-pass membrane protein</topology>
    </subcellularLocation>
</comment>
<comment type="disruption phenotype">
    <text evidence="4">Does not affect vegetative growth (PubMed:22346755). Does not significantly changes in the chitin content in vegetative hyphae, nor in conidia (PubMed:22346755).</text>
</comment>
<comment type="similarity">
    <text evidence="6">Belongs to the chitin synthase family. Class IV subfamily.</text>
</comment>
<comment type="sequence caution" evidence="6">
    <conflict type="frameshift">
        <sequence resource="EMBL-CDS" id="AAB71411"/>
    </conflict>
</comment>
<keyword id="KW-1003">Cell membrane</keyword>
<keyword id="KW-0961">Cell wall biogenesis/degradation</keyword>
<keyword id="KW-0325">Glycoprotein</keyword>
<keyword id="KW-0328">Glycosyltransferase</keyword>
<keyword id="KW-0472">Membrane</keyword>
<keyword id="KW-1185">Reference proteome</keyword>
<keyword id="KW-0808">Transferase</keyword>
<keyword id="KW-0812">Transmembrane</keyword>
<keyword id="KW-1133">Transmembrane helix</keyword>
<proteinExistence type="inferred from homology"/>
<gene>
    <name evidence="5" type="primary">CHS4</name>
    <name type="ORF">MGG_09962</name>
</gene>
<evidence type="ECO:0000255" key="1"/>
<evidence type="ECO:0000255" key="2">
    <source>
        <dbReference type="PROSITE-ProRule" id="PRU00498"/>
    </source>
</evidence>
<evidence type="ECO:0000256" key="3">
    <source>
        <dbReference type="SAM" id="MobiDB-lite"/>
    </source>
</evidence>
<evidence type="ECO:0000269" key="4">
    <source>
    </source>
</evidence>
<evidence type="ECO:0000303" key="5">
    <source>
    </source>
</evidence>
<evidence type="ECO:0000305" key="6"/>
<evidence type="ECO:0000305" key="7">
    <source>
    </source>
</evidence>